<comment type="function">
    <text evidence="1">Responsible for the release of ribosomes from messenger RNA at the termination of protein biosynthesis. May increase the efficiency of translation by recycling ribosomes from one round of translation to another.</text>
</comment>
<comment type="subcellular location">
    <subcellularLocation>
        <location evidence="1">Cytoplasm</location>
    </subcellularLocation>
</comment>
<comment type="similarity">
    <text evidence="1">Belongs to the RRF family.</text>
</comment>
<gene>
    <name evidence="1" type="primary">frr</name>
    <name type="ordered locus">VSAL_I2424</name>
</gene>
<feature type="chain" id="PRO_1000090703" description="Ribosome-recycling factor">
    <location>
        <begin position="1"/>
        <end position="185"/>
    </location>
</feature>
<evidence type="ECO:0000255" key="1">
    <source>
        <dbReference type="HAMAP-Rule" id="MF_00040"/>
    </source>
</evidence>
<proteinExistence type="inferred from homology"/>
<organism>
    <name type="scientific">Aliivibrio salmonicida (strain LFI1238)</name>
    <name type="common">Vibrio salmonicida (strain LFI1238)</name>
    <dbReference type="NCBI Taxonomy" id="316275"/>
    <lineage>
        <taxon>Bacteria</taxon>
        <taxon>Pseudomonadati</taxon>
        <taxon>Pseudomonadota</taxon>
        <taxon>Gammaproteobacteria</taxon>
        <taxon>Vibrionales</taxon>
        <taxon>Vibrionaceae</taxon>
        <taxon>Aliivibrio</taxon>
    </lineage>
</organism>
<reference key="1">
    <citation type="journal article" date="2008" name="BMC Genomics">
        <title>The genome sequence of the fish pathogen Aliivibrio salmonicida strain LFI1238 shows extensive evidence of gene decay.</title>
        <authorList>
            <person name="Hjerde E."/>
            <person name="Lorentzen M.S."/>
            <person name="Holden M.T."/>
            <person name="Seeger K."/>
            <person name="Paulsen S."/>
            <person name="Bason N."/>
            <person name="Churcher C."/>
            <person name="Harris D."/>
            <person name="Norbertczak H."/>
            <person name="Quail M.A."/>
            <person name="Sanders S."/>
            <person name="Thurston S."/>
            <person name="Parkhill J."/>
            <person name="Willassen N.P."/>
            <person name="Thomson N.R."/>
        </authorList>
    </citation>
    <scope>NUCLEOTIDE SEQUENCE [LARGE SCALE GENOMIC DNA]</scope>
    <source>
        <strain>LFI1238</strain>
    </source>
</reference>
<sequence>MINEIKKDAQERMEKSVEALKNNLLKIRTGRAHPSLLSGLSVEYYGARTPINQVANIIAEDSRTLAITVFDKELAGLVEKAIMMSDLGLNPMSAGTVIRVPLPPLTEERRKSLVKIVRGEAENGRVAVRNIRRDANGDIKALLKDKEISEDDDRRTQDEIQKLTDIAVKNIDDVLAVKEKELMEV</sequence>
<accession>B6EK54</accession>
<protein>
    <recommendedName>
        <fullName evidence="1">Ribosome-recycling factor</fullName>
        <shortName evidence="1">RRF</shortName>
    </recommendedName>
    <alternativeName>
        <fullName evidence="1">Ribosome-releasing factor</fullName>
    </alternativeName>
</protein>
<keyword id="KW-0963">Cytoplasm</keyword>
<keyword id="KW-0648">Protein biosynthesis</keyword>
<name>RRF_ALISL</name>
<dbReference type="EMBL" id="FM178379">
    <property type="protein sequence ID" value="CAQ80108.1"/>
    <property type="molecule type" value="Genomic_DNA"/>
</dbReference>
<dbReference type="RefSeq" id="WP_012550912.1">
    <property type="nucleotide sequence ID" value="NC_011312.1"/>
</dbReference>
<dbReference type="SMR" id="B6EK54"/>
<dbReference type="KEGG" id="vsa:VSAL_I2424"/>
<dbReference type="eggNOG" id="COG0233">
    <property type="taxonomic scope" value="Bacteria"/>
</dbReference>
<dbReference type="HOGENOM" id="CLU_073981_2_1_6"/>
<dbReference type="Proteomes" id="UP000001730">
    <property type="component" value="Chromosome 1"/>
</dbReference>
<dbReference type="GO" id="GO:0005829">
    <property type="term" value="C:cytosol"/>
    <property type="evidence" value="ECO:0007669"/>
    <property type="project" value="GOC"/>
</dbReference>
<dbReference type="GO" id="GO:0043023">
    <property type="term" value="F:ribosomal large subunit binding"/>
    <property type="evidence" value="ECO:0007669"/>
    <property type="project" value="TreeGrafter"/>
</dbReference>
<dbReference type="GO" id="GO:0002184">
    <property type="term" value="P:cytoplasmic translational termination"/>
    <property type="evidence" value="ECO:0007669"/>
    <property type="project" value="TreeGrafter"/>
</dbReference>
<dbReference type="CDD" id="cd00520">
    <property type="entry name" value="RRF"/>
    <property type="match status" value="1"/>
</dbReference>
<dbReference type="FunFam" id="1.10.132.20:FF:000001">
    <property type="entry name" value="Ribosome-recycling factor"/>
    <property type="match status" value="1"/>
</dbReference>
<dbReference type="FunFam" id="3.30.1360.40:FF:000001">
    <property type="entry name" value="Ribosome-recycling factor"/>
    <property type="match status" value="1"/>
</dbReference>
<dbReference type="Gene3D" id="3.30.1360.40">
    <property type="match status" value="1"/>
</dbReference>
<dbReference type="Gene3D" id="1.10.132.20">
    <property type="entry name" value="Ribosome-recycling factor"/>
    <property type="match status" value="1"/>
</dbReference>
<dbReference type="HAMAP" id="MF_00040">
    <property type="entry name" value="RRF"/>
    <property type="match status" value="1"/>
</dbReference>
<dbReference type="InterPro" id="IPR002661">
    <property type="entry name" value="Ribosome_recyc_fac"/>
</dbReference>
<dbReference type="InterPro" id="IPR023584">
    <property type="entry name" value="Ribosome_recyc_fac_dom"/>
</dbReference>
<dbReference type="InterPro" id="IPR036191">
    <property type="entry name" value="RRF_sf"/>
</dbReference>
<dbReference type="NCBIfam" id="TIGR00496">
    <property type="entry name" value="frr"/>
    <property type="match status" value="1"/>
</dbReference>
<dbReference type="PANTHER" id="PTHR20982:SF3">
    <property type="entry name" value="MITOCHONDRIAL RIBOSOME RECYCLING FACTOR PSEUDO 1"/>
    <property type="match status" value="1"/>
</dbReference>
<dbReference type="PANTHER" id="PTHR20982">
    <property type="entry name" value="RIBOSOME RECYCLING FACTOR"/>
    <property type="match status" value="1"/>
</dbReference>
<dbReference type="Pfam" id="PF01765">
    <property type="entry name" value="RRF"/>
    <property type="match status" value="1"/>
</dbReference>
<dbReference type="SUPFAM" id="SSF55194">
    <property type="entry name" value="Ribosome recycling factor, RRF"/>
    <property type="match status" value="1"/>
</dbReference>